<protein>
    <recommendedName>
        <fullName>Methyl-accepting chemotaxis protein 1</fullName>
    </recommendedName>
</protein>
<feature type="chain" id="PRO_0000250993" description="Methyl-accepting chemotaxis protein 1">
    <location>
        <begin position="1"/>
        <end position="656"/>
    </location>
</feature>
<feature type="transmembrane region" description="Helical" evidence="2">
    <location>
        <begin position="6"/>
        <end position="26"/>
    </location>
</feature>
<feature type="transmembrane region" description="Helical" evidence="2">
    <location>
        <begin position="276"/>
        <end position="296"/>
    </location>
</feature>
<feature type="domain" description="HAMP" evidence="3">
    <location>
        <begin position="299"/>
        <end position="351"/>
    </location>
</feature>
<feature type="domain" description="Methyl-accepting transducer" evidence="4">
    <location>
        <begin position="370"/>
        <end position="606"/>
    </location>
</feature>
<feature type="modified residue" description="Glutamate methyl ester (Glu)" evidence="5">
    <location>
        <position position="401"/>
    </location>
</feature>
<feature type="modified residue" description="Glutamate methyl ester (Glu)" evidence="5">
    <location>
        <position position="407"/>
    </location>
</feature>
<feature type="modified residue" description="Glutamate methyl ester (Glu)" evidence="5">
    <location>
        <position position="590"/>
    </location>
</feature>
<feature type="modified residue" description="Glutamate methyl ester (Glu)" evidence="5">
    <location>
        <position position="596"/>
    </location>
</feature>
<dbReference type="EMBL" id="AE000512">
    <property type="protein sequence ID" value="AAD35514.1"/>
    <property type="molecule type" value="Genomic_DNA"/>
</dbReference>
<dbReference type="PIR" id="E72379">
    <property type="entry name" value="E72379"/>
</dbReference>
<dbReference type="RefSeq" id="NP_228239.1">
    <property type="nucleotide sequence ID" value="NC_000853.1"/>
</dbReference>
<dbReference type="RefSeq" id="WP_010865116.1">
    <property type="nucleotide sequence ID" value="NC_000853.1"/>
</dbReference>
<dbReference type="SMR" id="Q9WYR0"/>
<dbReference type="FunCoup" id="Q9WYR0">
    <property type="interactions" value="87"/>
</dbReference>
<dbReference type="STRING" id="243274.TM_0429"/>
<dbReference type="PaxDb" id="243274-THEMA_02580"/>
<dbReference type="EnsemblBacteria" id="AAD35514">
    <property type="protein sequence ID" value="AAD35514"/>
    <property type="gene ID" value="TM_0429"/>
</dbReference>
<dbReference type="KEGG" id="tma:TM0429"/>
<dbReference type="KEGG" id="tmi:THEMA_02580"/>
<dbReference type="KEGG" id="tmm:Tmari_0426"/>
<dbReference type="KEGG" id="tmw:THMA_0435"/>
<dbReference type="eggNOG" id="COG0840">
    <property type="taxonomic scope" value="Bacteria"/>
</dbReference>
<dbReference type="InParanoid" id="Q9WYR0"/>
<dbReference type="OrthoDB" id="43680at2"/>
<dbReference type="Proteomes" id="UP000008183">
    <property type="component" value="Chromosome"/>
</dbReference>
<dbReference type="GO" id="GO:0005886">
    <property type="term" value="C:plasma membrane"/>
    <property type="evidence" value="ECO:0000318"/>
    <property type="project" value="GO_Central"/>
</dbReference>
<dbReference type="GO" id="GO:0004888">
    <property type="term" value="F:transmembrane signaling receptor activity"/>
    <property type="evidence" value="ECO:0000318"/>
    <property type="project" value="GO_Central"/>
</dbReference>
<dbReference type="GO" id="GO:0006935">
    <property type="term" value="P:chemotaxis"/>
    <property type="evidence" value="ECO:0000318"/>
    <property type="project" value="GO_Central"/>
</dbReference>
<dbReference type="GO" id="GO:0007165">
    <property type="term" value="P:signal transduction"/>
    <property type="evidence" value="ECO:0007669"/>
    <property type="project" value="UniProtKB-KW"/>
</dbReference>
<dbReference type="CDD" id="cd06225">
    <property type="entry name" value="HAMP"/>
    <property type="match status" value="1"/>
</dbReference>
<dbReference type="CDD" id="cd11386">
    <property type="entry name" value="MCP_signal"/>
    <property type="match status" value="1"/>
</dbReference>
<dbReference type="CDD" id="cd12912">
    <property type="entry name" value="PDC2_MCP_like"/>
    <property type="match status" value="1"/>
</dbReference>
<dbReference type="FunFam" id="1.10.287.950:FF:000003">
    <property type="entry name" value="Methyl-accepting chemotaxis protein"/>
    <property type="match status" value="1"/>
</dbReference>
<dbReference type="FunFam" id="3.30.450.20:FF:000229">
    <property type="entry name" value="Methyl-accepting chemotaxis sensory transducer"/>
    <property type="match status" value="1"/>
</dbReference>
<dbReference type="Gene3D" id="6.10.340.10">
    <property type="match status" value="1"/>
</dbReference>
<dbReference type="Gene3D" id="1.10.287.950">
    <property type="entry name" value="Methyl-accepting chemotaxis protein"/>
    <property type="match status" value="1"/>
</dbReference>
<dbReference type="Gene3D" id="3.30.450.20">
    <property type="entry name" value="PAS domain"/>
    <property type="match status" value="2"/>
</dbReference>
<dbReference type="InterPro" id="IPR033479">
    <property type="entry name" value="dCache_1"/>
</dbReference>
<dbReference type="InterPro" id="IPR003660">
    <property type="entry name" value="HAMP_dom"/>
</dbReference>
<dbReference type="InterPro" id="IPR051310">
    <property type="entry name" value="MCP_chemotaxis"/>
</dbReference>
<dbReference type="InterPro" id="IPR004089">
    <property type="entry name" value="MCPsignal_dom"/>
</dbReference>
<dbReference type="PANTHER" id="PTHR43531:SF11">
    <property type="entry name" value="METHYL-ACCEPTING CHEMOTAXIS PROTEIN 3"/>
    <property type="match status" value="1"/>
</dbReference>
<dbReference type="PANTHER" id="PTHR43531">
    <property type="entry name" value="PROTEIN ICFG"/>
    <property type="match status" value="1"/>
</dbReference>
<dbReference type="Pfam" id="PF02743">
    <property type="entry name" value="dCache_1"/>
    <property type="match status" value="1"/>
</dbReference>
<dbReference type="Pfam" id="PF00672">
    <property type="entry name" value="HAMP"/>
    <property type="match status" value="1"/>
</dbReference>
<dbReference type="Pfam" id="PF00015">
    <property type="entry name" value="MCPsignal"/>
    <property type="match status" value="1"/>
</dbReference>
<dbReference type="SMART" id="SM00304">
    <property type="entry name" value="HAMP"/>
    <property type="match status" value="1"/>
</dbReference>
<dbReference type="SMART" id="SM00283">
    <property type="entry name" value="MA"/>
    <property type="match status" value="1"/>
</dbReference>
<dbReference type="SUPFAM" id="SSF58104">
    <property type="entry name" value="Methyl-accepting chemotaxis protein (MCP) signaling domain"/>
    <property type="match status" value="1"/>
</dbReference>
<dbReference type="PROSITE" id="PS50111">
    <property type="entry name" value="CHEMOTAXIS_TRANSDUC_2"/>
    <property type="match status" value="1"/>
</dbReference>
<dbReference type="PROSITE" id="PS50885">
    <property type="entry name" value="HAMP"/>
    <property type="match status" value="1"/>
</dbReference>
<evidence type="ECO:0000250" key="1"/>
<evidence type="ECO:0000255" key="2"/>
<evidence type="ECO:0000255" key="3">
    <source>
        <dbReference type="PROSITE-ProRule" id="PRU00102"/>
    </source>
</evidence>
<evidence type="ECO:0000255" key="4">
    <source>
        <dbReference type="PROSITE-ProRule" id="PRU00284"/>
    </source>
</evidence>
<evidence type="ECO:0000269" key="5">
    <source>
    </source>
</evidence>
<evidence type="ECO:0000305" key="6"/>
<sequence>MSLRKKVFLLMIVVVAGLLLSFFLIYRSVSNSIINSVRSNTENQAKALSKFVVEKLNNVTNVARSAATYLGSQFFEAYMITNQLKTTVEKEKSTFAFAFSALSFNKSAALTDGNRVDRVDFADYEKYIKAVEGKDIFFMPETFQGTPVLTVVVPIETMNTRTGIVGFGINLSENSDLWKAVVEEGKASKSGYGLLVTSDGKVLIHKDMGNFMKDVKELGGFEKAFEEAKSGGEKYVEYEYNGEKKYTVWEKVPGYDFYIFSTGYLEELLAEGRKATLGTIVTYVVFGGVIFAVLFVSMMPVVKRMRQQVEKVKRFGEGDLTVEFEAKGRDELTQIEESLKEAALSLKEMIVSIIEAAKELSGASEEIKVLSEESHKMSENLHEEAKKILDEANNMSSALTEVTSGVEEVAASAQNISKITQDLTERSEAVTKAAREGTERVEAVGGVINKLKGSAERQRDYLRELVDSAKTIGEIVDTISSIAEQTNLLALNAAIEAARAGEAGRGFAVVADEIRKLAEESQRATEDIAKMLSSLRTTIEHVENGSKEMFEGVDEIAVMGEEVTKRFREILGRIEEINSMIENTAATAQEQGAAAEEMASAMDNVTKIVEGVVESLNRMESLIEDQTTSAAKVSQAAERLSELSEQLSTLVQKFKV</sequence>
<proteinExistence type="evidence at protein level"/>
<organism>
    <name type="scientific">Thermotoga maritima (strain ATCC 43589 / DSM 3109 / JCM 10099 / NBRC 100826 / MSB8)</name>
    <dbReference type="NCBI Taxonomy" id="243274"/>
    <lineage>
        <taxon>Bacteria</taxon>
        <taxon>Thermotogati</taxon>
        <taxon>Thermotogota</taxon>
        <taxon>Thermotogae</taxon>
        <taxon>Thermotogales</taxon>
        <taxon>Thermotogaceae</taxon>
        <taxon>Thermotoga</taxon>
    </lineage>
</organism>
<reference key="1">
    <citation type="journal article" date="1999" name="Nature">
        <title>Evidence for lateral gene transfer between Archaea and Bacteria from genome sequence of Thermotoga maritima.</title>
        <authorList>
            <person name="Nelson K.E."/>
            <person name="Clayton R.A."/>
            <person name="Gill S.R."/>
            <person name="Gwinn M.L."/>
            <person name="Dodson R.J."/>
            <person name="Haft D.H."/>
            <person name="Hickey E.K."/>
            <person name="Peterson J.D."/>
            <person name="Nelson W.C."/>
            <person name="Ketchum K.A."/>
            <person name="McDonald L.A."/>
            <person name="Utterback T.R."/>
            <person name="Malek J.A."/>
            <person name="Linher K.D."/>
            <person name="Garrett M.M."/>
            <person name="Stewart A.M."/>
            <person name="Cotton M.D."/>
            <person name="Pratt M.S."/>
            <person name="Phillips C.A."/>
            <person name="Richardson D.L."/>
            <person name="Heidelberg J.F."/>
            <person name="Sutton G.G."/>
            <person name="Fleischmann R.D."/>
            <person name="Eisen J.A."/>
            <person name="White O."/>
            <person name="Salzberg S.L."/>
            <person name="Smith H.O."/>
            <person name="Venter J.C."/>
            <person name="Fraser C.M."/>
        </authorList>
    </citation>
    <scope>NUCLEOTIDE SEQUENCE [LARGE SCALE GENOMIC DNA]</scope>
    <source>
        <strain>ATCC 43589 / DSM 3109 / JCM 10099 / NBRC 100826 / MSB8</strain>
    </source>
</reference>
<reference key="2">
    <citation type="journal article" date="2006" name="J. Bacteriol.">
        <title>Identification of methylation sites in Thermotoga maritima chemotaxis receptors.</title>
        <authorList>
            <person name="Perez E."/>
            <person name="Zheng H."/>
            <person name="Stock A.M."/>
        </authorList>
    </citation>
    <scope>METHYLATION AT GLU-401; GLU-407; GLU-590 AND GLU-596</scope>
</reference>
<keyword id="KW-1003">Cell membrane</keyword>
<keyword id="KW-0145">Chemotaxis</keyword>
<keyword id="KW-0472">Membrane</keyword>
<keyword id="KW-0488">Methylation</keyword>
<keyword id="KW-1185">Reference proteome</keyword>
<keyword id="KW-0807">Transducer</keyword>
<keyword id="KW-0812">Transmembrane</keyword>
<keyword id="KW-1133">Transmembrane helix</keyword>
<name>MCP1_THEMA</name>
<comment type="function">
    <text evidence="1">Chemotactic-signal transducers respond to changes in the concentration of attractants and repellents in the environment, transduce a signal from the outside to the inside of the cell, and facilitate sensory adaptation through the variation of the level of methylation.</text>
</comment>
<comment type="subcellular location">
    <subcellularLocation>
        <location evidence="6">Cell membrane</location>
        <topology evidence="6">Multi-pass membrane protein</topology>
    </subcellularLocation>
</comment>
<comment type="similarity">
    <text evidence="6">Belongs to the methyl-accepting chemotaxis (MCP) protein family.</text>
</comment>
<accession>Q9WYR0</accession>
<gene>
    <name type="primary">mcp1</name>
    <name type="ordered locus">TM_0429</name>
</gene>